<keyword id="KW-0067">ATP-binding</keyword>
<keyword id="KW-0093">Biotin biosynthesis</keyword>
<keyword id="KW-0963">Cytoplasm</keyword>
<keyword id="KW-0436">Ligase</keyword>
<keyword id="KW-0460">Magnesium</keyword>
<keyword id="KW-0479">Metal-binding</keyword>
<keyword id="KW-0547">Nucleotide-binding</keyword>
<keyword id="KW-1185">Reference proteome</keyword>
<feature type="chain" id="PRO_0000302490" description="ATP-dependent dethiobiotin synthetase BioD">
    <location>
        <begin position="1"/>
        <end position="240"/>
    </location>
</feature>
<feature type="active site" evidence="1">
    <location>
        <position position="40"/>
    </location>
</feature>
<feature type="binding site" evidence="1">
    <location>
        <begin position="15"/>
        <end position="20"/>
    </location>
    <ligand>
        <name>ATP</name>
        <dbReference type="ChEBI" id="CHEBI:30616"/>
    </ligand>
</feature>
<feature type="binding site" evidence="1">
    <location>
        <position position="19"/>
    </location>
    <ligand>
        <name>Mg(2+)</name>
        <dbReference type="ChEBI" id="CHEBI:18420"/>
    </ligand>
</feature>
<feature type="binding site" evidence="1">
    <location>
        <position position="57"/>
    </location>
    <ligand>
        <name>ATP</name>
        <dbReference type="ChEBI" id="CHEBI:30616"/>
    </ligand>
</feature>
<feature type="binding site" evidence="1">
    <location>
        <position position="57"/>
    </location>
    <ligand>
        <name>Mg(2+)</name>
        <dbReference type="ChEBI" id="CHEBI:18420"/>
    </ligand>
</feature>
<feature type="binding site" evidence="1">
    <location>
        <begin position="118"/>
        <end position="121"/>
    </location>
    <ligand>
        <name>ATP</name>
        <dbReference type="ChEBI" id="CHEBI:30616"/>
    </ligand>
</feature>
<feature type="binding site" evidence="1">
    <location>
        <position position="118"/>
    </location>
    <ligand>
        <name>Mg(2+)</name>
        <dbReference type="ChEBI" id="CHEBI:18420"/>
    </ligand>
</feature>
<feature type="binding site" evidence="1">
    <location>
        <begin position="178"/>
        <end position="179"/>
    </location>
    <ligand>
        <name>ATP</name>
        <dbReference type="ChEBI" id="CHEBI:30616"/>
    </ligand>
</feature>
<name>BIOD_BURPS</name>
<accession>Q63Y24</accession>
<dbReference type="EC" id="6.3.3.3" evidence="1"/>
<dbReference type="EMBL" id="BX571965">
    <property type="protein sequence ID" value="CAH34353.1"/>
    <property type="molecule type" value="Genomic_DNA"/>
</dbReference>
<dbReference type="RefSeq" id="WP_004530983.1">
    <property type="nucleotide sequence ID" value="NZ_CP009538.1"/>
</dbReference>
<dbReference type="RefSeq" id="YP_106991.1">
    <property type="nucleotide sequence ID" value="NC_006350.1"/>
</dbReference>
<dbReference type="SMR" id="Q63Y24"/>
<dbReference type="STRING" id="272560.BPSL0365"/>
<dbReference type="GeneID" id="93058883"/>
<dbReference type="KEGG" id="bps:BPSL0365"/>
<dbReference type="PATRIC" id="fig|272560.51.peg.1305"/>
<dbReference type="eggNOG" id="COG0132">
    <property type="taxonomic scope" value="Bacteria"/>
</dbReference>
<dbReference type="UniPathway" id="UPA00078">
    <property type="reaction ID" value="UER00161"/>
</dbReference>
<dbReference type="Proteomes" id="UP000000605">
    <property type="component" value="Chromosome 1"/>
</dbReference>
<dbReference type="GO" id="GO:0005829">
    <property type="term" value="C:cytosol"/>
    <property type="evidence" value="ECO:0007669"/>
    <property type="project" value="TreeGrafter"/>
</dbReference>
<dbReference type="GO" id="GO:0005524">
    <property type="term" value="F:ATP binding"/>
    <property type="evidence" value="ECO:0007669"/>
    <property type="project" value="UniProtKB-UniRule"/>
</dbReference>
<dbReference type="GO" id="GO:0004141">
    <property type="term" value="F:dethiobiotin synthase activity"/>
    <property type="evidence" value="ECO:0007669"/>
    <property type="project" value="UniProtKB-UniRule"/>
</dbReference>
<dbReference type="GO" id="GO:0000287">
    <property type="term" value="F:magnesium ion binding"/>
    <property type="evidence" value="ECO:0007669"/>
    <property type="project" value="UniProtKB-UniRule"/>
</dbReference>
<dbReference type="GO" id="GO:0009102">
    <property type="term" value="P:biotin biosynthetic process"/>
    <property type="evidence" value="ECO:0007669"/>
    <property type="project" value="UniProtKB-UniRule"/>
</dbReference>
<dbReference type="CDD" id="cd03109">
    <property type="entry name" value="DTBS"/>
    <property type="match status" value="1"/>
</dbReference>
<dbReference type="FunFam" id="3.40.50.300:FF:000292">
    <property type="entry name" value="ATP-dependent dethiobiotin synthetase BioD"/>
    <property type="match status" value="1"/>
</dbReference>
<dbReference type="Gene3D" id="3.40.50.300">
    <property type="entry name" value="P-loop containing nucleotide triphosphate hydrolases"/>
    <property type="match status" value="1"/>
</dbReference>
<dbReference type="HAMAP" id="MF_00336">
    <property type="entry name" value="BioD"/>
    <property type="match status" value="1"/>
</dbReference>
<dbReference type="InterPro" id="IPR004472">
    <property type="entry name" value="DTB_synth_BioD"/>
</dbReference>
<dbReference type="InterPro" id="IPR027417">
    <property type="entry name" value="P-loop_NTPase"/>
</dbReference>
<dbReference type="NCBIfam" id="TIGR00347">
    <property type="entry name" value="bioD"/>
    <property type="match status" value="1"/>
</dbReference>
<dbReference type="PANTHER" id="PTHR43210">
    <property type="entry name" value="DETHIOBIOTIN SYNTHETASE"/>
    <property type="match status" value="1"/>
</dbReference>
<dbReference type="PANTHER" id="PTHR43210:SF5">
    <property type="entry name" value="DETHIOBIOTIN SYNTHETASE"/>
    <property type="match status" value="1"/>
</dbReference>
<dbReference type="Pfam" id="PF13500">
    <property type="entry name" value="AAA_26"/>
    <property type="match status" value="1"/>
</dbReference>
<dbReference type="PIRSF" id="PIRSF006755">
    <property type="entry name" value="DTB_synth"/>
    <property type="match status" value="1"/>
</dbReference>
<dbReference type="SUPFAM" id="SSF52540">
    <property type="entry name" value="P-loop containing nucleoside triphosphate hydrolases"/>
    <property type="match status" value="1"/>
</dbReference>
<sequence>MSAPLSLFVTGTDTEIGKTFVSAALLHGFARAGLRAAAMKPVAAGAYERDGAWRNEDADQLDAAANVALPAAIRTPFLLKAPAAPHIVAAREGVALDIGTIVDAHRRACEMADVIVVEGVGGFRVPLADTRDTADLAVALGLPVVLVVGVRLGCISHALLTAEAIAARGLPLAGWVANRIDPAMPFADDNIDTLRAWLEREHRAPLLGALAHMSPPSPDAASHALDVNLLLNALRAAAPR</sequence>
<protein>
    <recommendedName>
        <fullName evidence="1">ATP-dependent dethiobiotin synthetase BioD</fullName>
        <ecNumber evidence="1">6.3.3.3</ecNumber>
    </recommendedName>
    <alternativeName>
        <fullName evidence="1">DTB synthetase</fullName>
        <shortName evidence="1">DTBS</shortName>
    </alternativeName>
    <alternativeName>
        <fullName evidence="1">Dethiobiotin synthase</fullName>
    </alternativeName>
</protein>
<gene>
    <name evidence="1" type="primary">bioD</name>
    <name type="ordered locus">BPSL0365</name>
</gene>
<organism>
    <name type="scientific">Burkholderia pseudomallei (strain K96243)</name>
    <dbReference type="NCBI Taxonomy" id="272560"/>
    <lineage>
        <taxon>Bacteria</taxon>
        <taxon>Pseudomonadati</taxon>
        <taxon>Pseudomonadota</taxon>
        <taxon>Betaproteobacteria</taxon>
        <taxon>Burkholderiales</taxon>
        <taxon>Burkholderiaceae</taxon>
        <taxon>Burkholderia</taxon>
        <taxon>pseudomallei group</taxon>
    </lineage>
</organism>
<proteinExistence type="inferred from homology"/>
<evidence type="ECO:0000255" key="1">
    <source>
        <dbReference type="HAMAP-Rule" id="MF_00336"/>
    </source>
</evidence>
<reference key="1">
    <citation type="journal article" date="2004" name="Proc. Natl. Acad. Sci. U.S.A.">
        <title>Genomic plasticity of the causative agent of melioidosis, Burkholderia pseudomallei.</title>
        <authorList>
            <person name="Holden M.T.G."/>
            <person name="Titball R.W."/>
            <person name="Peacock S.J."/>
            <person name="Cerdeno-Tarraga A.-M."/>
            <person name="Atkins T."/>
            <person name="Crossman L.C."/>
            <person name="Pitt T."/>
            <person name="Churcher C."/>
            <person name="Mungall K.L."/>
            <person name="Bentley S.D."/>
            <person name="Sebaihia M."/>
            <person name="Thomson N.R."/>
            <person name="Bason N."/>
            <person name="Beacham I.R."/>
            <person name="Brooks K."/>
            <person name="Brown K.A."/>
            <person name="Brown N.F."/>
            <person name="Challis G.L."/>
            <person name="Cherevach I."/>
            <person name="Chillingworth T."/>
            <person name="Cronin A."/>
            <person name="Crossett B."/>
            <person name="Davis P."/>
            <person name="DeShazer D."/>
            <person name="Feltwell T."/>
            <person name="Fraser A."/>
            <person name="Hance Z."/>
            <person name="Hauser H."/>
            <person name="Holroyd S."/>
            <person name="Jagels K."/>
            <person name="Keith K.E."/>
            <person name="Maddison M."/>
            <person name="Moule S."/>
            <person name="Price C."/>
            <person name="Quail M.A."/>
            <person name="Rabbinowitsch E."/>
            <person name="Rutherford K."/>
            <person name="Sanders M."/>
            <person name="Simmonds M."/>
            <person name="Songsivilai S."/>
            <person name="Stevens K."/>
            <person name="Tumapa S."/>
            <person name="Vesaratchavest M."/>
            <person name="Whitehead S."/>
            <person name="Yeats C."/>
            <person name="Barrell B.G."/>
            <person name="Oyston P.C.F."/>
            <person name="Parkhill J."/>
        </authorList>
    </citation>
    <scope>NUCLEOTIDE SEQUENCE [LARGE SCALE GENOMIC DNA]</scope>
    <source>
        <strain>K96243</strain>
    </source>
</reference>
<comment type="function">
    <text evidence="1">Catalyzes a mechanistically unusual reaction, the ATP-dependent insertion of CO2 between the N7 and N8 nitrogen atoms of 7,8-diaminopelargonic acid (DAPA, also called 7,8-diammoniononanoate) to form a ureido ring.</text>
</comment>
<comment type="catalytic activity">
    <reaction evidence="1">
        <text>(7R,8S)-7,8-diammoniononanoate + CO2 + ATP = (4R,5S)-dethiobiotin + ADP + phosphate + 3 H(+)</text>
        <dbReference type="Rhea" id="RHEA:15805"/>
        <dbReference type="ChEBI" id="CHEBI:15378"/>
        <dbReference type="ChEBI" id="CHEBI:16526"/>
        <dbReference type="ChEBI" id="CHEBI:30616"/>
        <dbReference type="ChEBI" id="CHEBI:43474"/>
        <dbReference type="ChEBI" id="CHEBI:149469"/>
        <dbReference type="ChEBI" id="CHEBI:149473"/>
        <dbReference type="ChEBI" id="CHEBI:456216"/>
        <dbReference type="EC" id="6.3.3.3"/>
    </reaction>
</comment>
<comment type="cofactor">
    <cofactor evidence="1">
        <name>Mg(2+)</name>
        <dbReference type="ChEBI" id="CHEBI:18420"/>
    </cofactor>
</comment>
<comment type="pathway">
    <text evidence="1">Cofactor biosynthesis; biotin biosynthesis; biotin from 7,8-diaminononanoate: step 1/2.</text>
</comment>
<comment type="subunit">
    <text evidence="1">Homodimer.</text>
</comment>
<comment type="subcellular location">
    <subcellularLocation>
        <location evidence="1">Cytoplasm</location>
    </subcellularLocation>
</comment>
<comment type="similarity">
    <text evidence="1">Belongs to the dethiobiotin synthetase family.</text>
</comment>